<sequence>MDYIKGIAFDLYGTLFDVHSVVGRCDEAFPGRGREISALWRQKQLEYTWLRSLMNRYVNFQQATEDALRFTCRHLGLDLDARTRSTLCDAYLRLAPFSEVPDSLRELKRRGLKLAILSNGSPQSIDAVVSHAGLRDGFDHLLSVDPVQVYKPDNRVYELAEQALGLDRSAILFVSSNAWDATGARYFGFPTCWINRTGNVFEEMGQTPDWEVTSLRAVVELFETAAGKAEKG</sequence>
<protein>
    <recommendedName>
        <fullName evidence="6">(S)-2-haloacid dehalogenase</fullName>
        <ecNumber evidence="1 3">3.8.1.2</ecNumber>
    </recommendedName>
    <alternativeName>
        <fullName>2-haloalkanoic acid dehalogenase</fullName>
    </alternativeName>
    <alternativeName>
        <fullName>Halocarboxylic acid halidohydrolase</fullName>
    </alternativeName>
    <alternativeName>
        <fullName evidence="5">L-2-haloacid dehalogenase</fullName>
    </alternativeName>
    <alternativeName>
        <fullName>L-DEX</fullName>
    </alternativeName>
</protein>
<dbReference type="EC" id="3.8.1.2" evidence="1 3"/>
<dbReference type="EMBL" id="S74078">
    <property type="protein sequence ID" value="AAB32245.1"/>
    <property type="molecule type" value="Genomic_DNA"/>
</dbReference>
<dbReference type="PDB" id="1JUD">
    <property type="method" value="X-ray"/>
    <property type="resolution" value="2.50 A"/>
    <property type="chains" value="A=1-232"/>
</dbReference>
<dbReference type="PDB" id="1QH9">
    <property type="method" value="X-ray"/>
    <property type="resolution" value="2.50 A"/>
    <property type="chains" value="A=1-232"/>
</dbReference>
<dbReference type="PDB" id="1ZRM">
    <property type="method" value="X-ray"/>
    <property type="resolution" value="2.00 A"/>
    <property type="chains" value="A=1-232"/>
</dbReference>
<dbReference type="PDB" id="1ZRN">
    <property type="method" value="X-ray"/>
    <property type="resolution" value="1.83 A"/>
    <property type="chains" value="A=1-232"/>
</dbReference>
<dbReference type="PDBsum" id="1JUD"/>
<dbReference type="PDBsum" id="1QH9"/>
<dbReference type="PDBsum" id="1ZRM"/>
<dbReference type="PDBsum" id="1ZRN"/>
<dbReference type="SMR" id="Q53464"/>
<dbReference type="DrugBank" id="DB03568">
    <property type="generic name" value="Butyric Acid"/>
</dbReference>
<dbReference type="DrugBank" id="DB03066">
    <property type="generic name" value="D-Lactic acid"/>
</dbReference>
<dbReference type="KEGG" id="ag:AAB32245"/>
<dbReference type="EvolutionaryTrace" id="Q53464"/>
<dbReference type="GO" id="GO:0018784">
    <property type="term" value="F:(S)-2-haloacid dehalogenase activity"/>
    <property type="evidence" value="ECO:0007669"/>
    <property type="project" value="UniProtKB-EC"/>
</dbReference>
<dbReference type="CDD" id="cd02588">
    <property type="entry name" value="HAD_L2-DEX"/>
    <property type="match status" value="1"/>
</dbReference>
<dbReference type="Gene3D" id="3.40.50.1000">
    <property type="entry name" value="HAD superfamily/HAD-like"/>
    <property type="match status" value="1"/>
</dbReference>
<dbReference type="Gene3D" id="1.10.150.240">
    <property type="entry name" value="Putative phosphatase, domain 2"/>
    <property type="match status" value="1"/>
</dbReference>
<dbReference type="InterPro" id="IPR006328">
    <property type="entry name" value="2-HAD"/>
</dbReference>
<dbReference type="InterPro" id="IPR036412">
    <property type="entry name" value="HAD-like_sf"/>
</dbReference>
<dbReference type="InterPro" id="IPR006439">
    <property type="entry name" value="HAD-SF_hydro_IA"/>
</dbReference>
<dbReference type="InterPro" id="IPR023214">
    <property type="entry name" value="HAD_sf"/>
</dbReference>
<dbReference type="InterPro" id="IPR023198">
    <property type="entry name" value="PGP-like_dom2"/>
</dbReference>
<dbReference type="InterPro" id="IPR051540">
    <property type="entry name" value="S-2-haloacid_dehalogenase"/>
</dbReference>
<dbReference type="NCBIfam" id="TIGR01493">
    <property type="entry name" value="HAD-SF-IA-v2"/>
    <property type="match status" value="1"/>
</dbReference>
<dbReference type="NCBIfam" id="TIGR01428">
    <property type="entry name" value="HAD_type_II"/>
    <property type="match status" value="1"/>
</dbReference>
<dbReference type="PANTHER" id="PTHR43316:SF3">
    <property type="entry name" value="HALOACID DEHALOGENASE, TYPE II (AFU_ORTHOLOGUE AFUA_2G07750)-RELATED"/>
    <property type="match status" value="1"/>
</dbReference>
<dbReference type="PANTHER" id="PTHR43316">
    <property type="entry name" value="HYDROLASE, HALOACID DELAHOGENASE-RELATED"/>
    <property type="match status" value="1"/>
</dbReference>
<dbReference type="Pfam" id="PF00702">
    <property type="entry name" value="Hydrolase"/>
    <property type="match status" value="1"/>
</dbReference>
<dbReference type="PRINTS" id="PR00413">
    <property type="entry name" value="HADHALOGNASE"/>
</dbReference>
<dbReference type="SFLD" id="SFLDF00045">
    <property type="entry name" value="2-haloacid_dehalogenase"/>
    <property type="match status" value="1"/>
</dbReference>
<dbReference type="SFLD" id="SFLDG01135">
    <property type="entry name" value="C1.5.6:_HAD__Beta-PGM__Phospha"/>
    <property type="match status" value="1"/>
</dbReference>
<dbReference type="SUPFAM" id="SSF56784">
    <property type="entry name" value="HAD-like"/>
    <property type="match status" value="1"/>
</dbReference>
<feature type="chain" id="PRO_0000079166" description="(S)-2-haloacid dehalogenase">
    <location>
        <begin position="1"/>
        <end position="232"/>
    </location>
</feature>
<feature type="region of interest" description="Important for catalytic activity" evidence="1 8">
    <location>
        <begin position="175"/>
        <end position="180"/>
    </location>
</feature>
<feature type="active site" description="Nucleophile" evidence="3 7">
    <location>
        <position position="10"/>
    </location>
</feature>
<feature type="binding site" evidence="3 4 10 11 12">
    <location>
        <begin position="11"/>
        <end position="12"/>
    </location>
    <ligand>
        <name>an (S)-2-haloacid</name>
        <dbReference type="ChEBI" id="CHEBI:137405"/>
    </ligand>
</feature>
<feature type="binding site" evidence="8 11 12">
    <location>
        <position position="41"/>
    </location>
    <ligand>
        <name>an (S)-2-haloacid</name>
        <dbReference type="ChEBI" id="CHEBI:137405"/>
    </ligand>
</feature>
<feature type="binding site" evidence="3 4 10 11 12">
    <location>
        <begin position="118"/>
        <end position="119"/>
    </location>
    <ligand>
        <name>an (S)-2-haloacid</name>
        <dbReference type="ChEBI" id="CHEBI:137405"/>
    </ligand>
</feature>
<feature type="site" description="Important for catalytic activity" evidence="1 8">
    <location>
        <position position="14"/>
    </location>
</feature>
<feature type="site" description="Important for catalytic activity" evidence="1 8">
    <location>
        <position position="151"/>
    </location>
</feature>
<feature type="site" description="Important for catalytic activity" evidence="1 8">
    <location>
        <position position="157"/>
    </location>
</feature>
<feature type="mutagenesis site" description="Loss of catalytic activity." evidence="1">
    <original>D</original>
    <variation>E</variation>
    <variation>S</variation>
    <variation>A</variation>
    <variation>G</variation>
    <location>
        <position position="10"/>
    </location>
</feature>
<feature type="mutagenesis site" description="Severe reduction in catalytic activity." evidence="1">
    <original>D</original>
    <variation>N</variation>
    <location>
        <position position="10"/>
    </location>
</feature>
<feature type="mutagenesis site" description="Severe reduction in catalytic activity. No effect on substrate affinity." evidence="1">
    <original>T</original>
    <variation>A</variation>
    <location>
        <position position="14"/>
    </location>
</feature>
<feature type="mutagenesis site" description="Severe reduction in catalytic activity." evidence="1">
    <original>T</original>
    <variation>P</variation>
    <variation>C</variation>
    <location>
        <position position="14"/>
    </location>
</feature>
<feature type="mutagenesis site" description="Mild reduction in catalytic activity." evidence="1">
    <original>T</original>
    <variation>S</variation>
    <location>
        <position position="14"/>
    </location>
</feature>
<feature type="mutagenesis site" description="Severe reduction in catalytic activity." evidence="1">
    <original>R</original>
    <variation>E</variation>
    <location>
        <position position="41"/>
    </location>
</feature>
<feature type="mutagenesis site" description="Severe reduction in catalytic activity. 4-fold decrease in substrate affinity." evidence="1">
    <original>R</original>
    <variation>K</variation>
    <location>
        <position position="41"/>
    </location>
</feature>
<feature type="mutagenesis site" description="Loss of catalytic activity." evidence="1">
    <original>R</original>
    <variation>W</variation>
    <location>
        <position position="41"/>
    </location>
</feature>
<feature type="mutagenesis site" description="Severe reduction in catalytic activity. 25-fold decrease in substrate affinity." evidence="1">
    <original>S</original>
    <variation>A</variation>
    <location>
        <position position="118"/>
    </location>
</feature>
<feature type="mutagenesis site" description="Loss of catalytic activity." evidence="1">
    <original>K</original>
    <variation>A</variation>
    <location>
        <position position="151"/>
    </location>
</feature>
<feature type="mutagenesis site" description="Severe reduction in catalytic activity." evidence="1">
    <original>K</original>
    <variation>R</variation>
    <location>
        <position position="151"/>
    </location>
</feature>
<feature type="mutagenesis site" description="Severe reduction in catalytic activity." evidence="1">
    <original>Y</original>
    <variation>C</variation>
    <variation>S</variation>
    <variation>H</variation>
    <variation>W</variation>
    <location>
        <position position="157"/>
    </location>
</feature>
<feature type="mutagenesis site" description="Severe reduction in catalytic activity. 1.5-fold decrease in substrate affinity." evidence="1">
    <original>Y</original>
    <variation>F</variation>
    <location>
        <position position="157"/>
    </location>
</feature>
<feature type="mutagenesis site" description="Severe reduction in catalytic activity. 2-fold decrease in substrate affinity." evidence="1 3">
    <original>S</original>
    <variation>A</variation>
    <location>
        <position position="175"/>
    </location>
</feature>
<feature type="mutagenesis site" description="Severe reduction in catalytic activity." evidence="1">
    <original>S</original>
    <variation>C</variation>
    <location>
        <position position="175"/>
    </location>
</feature>
<feature type="mutagenesis site" description="Moderate reduction in catalytic activity." evidence="1">
    <original>S</original>
    <variation>T</variation>
    <location>
        <position position="175"/>
    </location>
</feature>
<feature type="mutagenesis site" description="Loss of catalytic activity." evidence="1">
    <original>N</original>
    <variation>D</variation>
    <variation>I</variation>
    <location>
        <position position="177"/>
    </location>
</feature>
<feature type="mutagenesis site" description="Severe reduction in catalytic activity." evidence="1">
    <original>N</original>
    <variation>W</variation>
    <variation>K</variation>
    <variation>H</variation>
    <variation>Q</variation>
    <location>
        <position position="177"/>
    </location>
</feature>
<feature type="mutagenesis site" description="Loss of catalytic activity." evidence="1">
    <original>D</original>
    <variation>N</variation>
    <variation>E</variation>
    <variation>S</variation>
    <variation>G</variation>
    <location>
        <position position="180"/>
    </location>
</feature>
<feature type="strand" evidence="13">
    <location>
        <begin position="6"/>
        <end position="9"/>
    </location>
</feature>
<feature type="turn" evidence="13">
    <location>
        <begin position="13"/>
        <end position="15"/>
    </location>
</feature>
<feature type="helix" evidence="13">
    <location>
        <begin position="19"/>
        <end position="28"/>
    </location>
</feature>
<feature type="turn" evidence="13">
    <location>
        <begin position="30"/>
        <end position="32"/>
    </location>
</feature>
<feature type="helix" evidence="13">
    <location>
        <begin position="33"/>
        <end position="54"/>
    </location>
</feature>
<feature type="helix" evidence="13">
    <location>
        <begin position="60"/>
        <end position="75"/>
    </location>
</feature>
<feature type="helix" evidence="13">
    <location>
        <begin position="81"/>
        <end position="89"/>
    </location>
</feature>
<feature type="helix" evidence="13">
    <location>
        <begin position="90"/>
        <end position="93"/>
    </location>
</feature>
<feature type="helix" evidence="13">
    <location>
        <begin position="100"/>
        <end position="109"/>
    </location>
</feature>
<feature type="strand" evidence="13">
    <location>
        <begin position="113"/>
        <end position="120"/>
    </location>
</feature>
<feature type="helix" evidence="13">
    <location>
        <begin position="122"/>
        <end position="131"/>
    </location>
</feature>
<feature type="helix" evidence="13">
    <location>
        <begin position="135"/>
        <end position="137"/>
    </location>
</feature>
<feature type="strand" evidence="13">
    <location>
        <begin position="139"/>
        <end position="144"/>
    </location>
</feature>
<feature type="helix" evidence="13">
    <location>
        <begin position="145"/>
        <end position="147"/>
    </location>
</feature>
<feature type="helix" evidence="13">
    <location>
        <begin position="154"/>
        <end position="164"/>
    </location>
</feature>
<feature type="helix" evidence="13">
    <location>
        <begin position="168"/>
        <end position="170"/>
    </location>
</feature>
<feature type="strand" evidence="13">
    <location>
        <begin position="171"/>
        <end position="176"/>
    </location>
</feature>
<feature type="helix" evidence="13">
    <location>
        <begin position="178"/>
        <end position="187"/>
    </location>
</feature>
<feature type="strand" evidence="13">
    <location>
        <begin position="191"/>
        <end position="194"/>
    </location>
</feature>
<feature type="strand" evidence="13">
    <location>
        <begin position="203"/>
        <end position="205"/>
    </location>
</feature>
<feature type="strand" evidence="13">
    <location>
        <begin position="209"/>
        <end position="214"/>
    </location>
</feature>
<feature type="helix" evidence="13">
    <location>
        <begin position="215"/>
        <end position="219"/>
    </location>
</feature>
<accession>Q53464</accession>
<comment type="function">
    <text evidence="1 3">Catalyzes the hydrolytic dehalogenation of small (S)-2-haloalkanoic acids to yield the corresponding (R)-2-hydroxyalkanoic acids (PubMed:7490277, PubMed:9614112). Acts on acids of short chain lengths, C(2) to C(4), with inversion of configuration at C-2 (PubMed:7490277, PubMed:9614112). Active with 2-halogenated carboxylic acids and converts only the S-isomer (or L-isomer) of 2-chloropropionic acid with inversion of configuration to produce R-lactate (or D-isomer) (PubMed:7490277, PubMed:9614112).</text>
</comment>
<comment type="catalytic activity">
    <reaction evidence="1 3">
        <text>an (S)-2-haloacid + H2O = a (2R)-2-hydroxycarboxylate + a halide anion + H(+)</text>
        <dbReference type="Rhea" id="RHEA:11192"/>
        <dbReference type="ChEBI" id="CHEBI:15377"/>
        <dbReference type="ChEBI" id="CHEBI:15378"/>
        <dbReference type="ChEBI" id="CHEBI:16042"/>
        <dbReference type="ChEBI" id="CHEBI:58314"/>
        <dbReference type="ChEBI" id="CHEBI:137405"/>
        <dbReference type="EC" id="3.8.1.2"/>
    </reaction>
</comment>
<comment type="catalytic activity">
    <reaction evidence="1 3">
        <text>(S)-2-chloropropanoate + H2O = (R)-lactate + chloride + H(+)</text>
        <dbReference type="Rhea" id="RHEA:67956"/>
        <dbReference type="ChEBI" id="CHEBI:15377"/>
        <dbReference type="ChEBI" id="CHEBI:15378"/>
        <dbReference type="ChEBI" id="CHEBI:16004"/>
        <dbReference type="ChEBI" id="CHEBI:17996"/>
        <dbReference type="ChEBI" id="CHEBI:73934"/>
    </reaction>
</comment>
<comment type="biophysicochemical properties">
    <kinetics>
        <KM evidence="1">0.37 mM for (2S)-2-chloropropanoic acid</KM>
        <text evidence="1">kcat is 47 sec(-1) for (2S)-2-chloropropanoic acid as substrate.</text>
    </kinetics>
</comment>
<comment type="subunit">
    <text evidence="2">Homodimer.</text>
</comment>
<comment type="biotechnology">
    <text evidence="6">(S)-2-haloacid dehalogenases may be used for the biodegradation of halogenated substances and their derivatives which are widely used as pesticides, herbicides and other industrial products.</text>
</comment>
<comment type="similarity">
    <text evidence="6">Belongs to the HAD-like hydrolase superfamily. S-2-haloalkanoic acid dehalogenase family.</text>
</comment>
<keyword id="KW-0002">3D-structure</keyword>
<keyword id="KW-0378">Hydrolase</keyword>
<proteinExistence type="evidence at protein level"/>
<evidence type="ECO:0000269" key="1">
    <source>
    </source>
</evidence>
<evidence type="ECO:0000269" key="2">
    <source>
    </source>
</evidence>
<evidence type="ECO:0000269" key="3">
    <source>
    </source>
</evidence>
<evidence type="ECO:0000269" key="4">
    <source ref="5"/>
</evidence>
<evidence type="ECO:0000303" key="5">
    <source>
    </source>
</evidence>
<evidence type="ECO:0000305" key="6"/>
<evidence type="ECO:0000305" key="7">
    <source>
    </source>
</evidence>
<evidence type="ECO:0000305" key="8">
    <source>
    </source>
</evidence>
<evidence type="ECO:0007744" key="9">
    <source>
        <dbReference type="PDB" id="1JUD"/>
    </source>
</evidence>
<evidence type="ECO:0007744" key="10">
    <source>
        <dbReference type="PDB" id="1QH9"/>
    </source>
</evidence>
<evidence type="ECO:0007744" key="11">
    <source>
        <dbReference type="PDB" id="1ZRM"/>
    </source>
</evidence>
<evidence type="ECO:0007744" key="12">
    <source>
        <dbReference type="PDB" id="1ZRN"/>
    </source>
</evidence>
<evidence type="ECO:0007829" key="13">
    <source>
        <dbReference type="PDB" id="1ZRN"/>
    </source>
</evidence>
<reference key="1">
    <citation type="journal article" date="1994" name="Appl. Environ. Microbiol.">
        <title>Comparative studies of genes encoding thermostable L-2-halo acid dehalogenase from Pseudomonas sp. strain YL, other dehalogenases, and two related hypothetical proteins from Escherichia coli.</title>
        <authorList>
            <person name="Nardi-Dei V."/>
            <person name="Kurihara T."/>
            <person name="Okamura T."/>
            <person name="Liu J.Q."/>
            <person name="Koshikawa H."/>
            <person name="Ozaki H."/>
            <person name="Terashima Y."/>
            <person name="Esaki N."/>
            <person name="Soda K."/>
        </authorList>
    </citation>
    <scope>NUCLEOTIDE SEQUENCE [GENOMIC DNA]</scope>
</reference>
<reference key="2">
    <citation type="journal article" date="1995" name="J. Biochem.">
        <title>Comprehensive site-directed mutagenesis of L-2-halo acid dehalogenase to probe catalytic amino acid residues.</title>
        <authorList>
            <person name="Kurihara T."/>
            <person name="Liu J.-Q."/>
            <person name="Nardi-Dei V."/>
            <person name="Koshikawa H."/>
            <person name="Esaki N."/>
            <person name="Soda K."/>
        </authorList>
    </citation>
    <scope>FUNCTION</scope>
    <scope>CATALYTIC ACTIVITY</scope>
    <scope>BIOPHYSICOCHEMICAL PROPERTIES</scope>
    <scope>ACTIVE SITE</scope>
    <scope>MUTAGENESIS OF ASP-10; THR-14; ARG-41; SER-118; LYS-151; TYR-157; SER-175; ASN-177 AND ASP-180</scope>
</reference>
<reference evidence="9" key="3">
    <citation type="journal article" date="1996" name="J. Biol. Chem.">
        <title>Crystal structure of L-2-haloacid dehalogenase from Pseudomonas sp. YL. An alpha/beta hydrolase structure that is different from the alpha/beta hydrolase fold.</title>
        <authorList>
            <person name="Hisano T."/>
            <person name="Hata Y."/>
            <person name="Fujii T."/>
            <person name="Liu J.-Q."/>
            <person name="Kurihara T."/>
            <person name="Esaki N."/>
            <person name="Soda K."/>
        </authorList>
    </citation>
    <scope>X-RAY CRYSTALLOGRAPHY (2.5 ANGSTROMS)</scope>
    <scope>SUBUNIT</scope>
</reference>
<reference evidence="11 12" key="4">
    <citation type="journal article" date="1998" name="J. Biol. Chem.">
        <title>Crystal structures of reaction intermediates of L-2-haloacid dehalogenase and implications for the reaction mechanism.</title>
        <authorList>
            <person name="Li Y.F."/>
            <person name="Hata Y."/>
            <person name="Fujii T."/>
            <person name="Hisano T."/>
            <person name="Nishihara M."/>
            <person name="Kurihara T."/>
            <person name="Esaki N."/>
        </authorList>
    </citation>
    <scope>X-RAY CRYSTALLOGRAPHY (1.83 ANGSTROMS) OF MUTANT ALA-175 IN COMPLEX WITH MONOCHLOROACETATE AND 2-CHLORO-N-BUTYRATE</scope>
    <scope>FUNCTION</scope>
    <scope>CATALYTIC ACTIVITY</scope>
    <scope>ACTIVE SITE</scope>
    <scope>MUTAGENESIS OF SER-175</scope>
</reference>
<reference evidence="10" key="5">
    <citation type="submission" date="1999-05" db="PDB data bank">
        <title>The Structure of L-2-Haloacid Dehalogenase Complexed with a Reaction Product Reveals the Mechanism of Intermediate Hydrolysis in Dehalogenase.</title>
        <authorList>
            <person name="Li Y.-F."/>
            <person name="Hata Y."/>
            <person name="Fujii T."/>
            <person name="Kurihara T."/>
            <person name="Esaki N."/>
        </authorList>
    </citation>
    <scope>X-RAY CRYSTALLOGRAPHY (2.50 ANGSTROMS) IN COMPLEX WITH LACTATE</scope>
</reference>
<name>HAD_PSEUY</name>
<organism>
    <name type="scientific">Pseudomonas sp. (strain YL)</name>
    <dbReference type="NCBI Taxonomy" id="66693"/>
    <lineage>
        <taxon>Bacteria</taxon>
        <taxon>Pseudomonadati</taxon>
        <taxon>Pseudomonadota</taxon>
    </lineage>
</organism>